<protein>
    <recommendedName>
        <fullName>KATNB1-like protein 1</fullName>
    </recommendedName>
    <alternativeName>
        <fullName>Katanin p80 subunit B-like 1</fullName>
    </alternativeName>
</protein>
<organism>
    <name type="scientific">Mus musculus</name>
    <name type="common">Mouse</name>
    <dbReference type="NCBI Taxonomy" id="10090"/>
    <lineage>
        <taxon>Eukaryota</taxon>
        <taxon>Metazoa</taxon>
        <taxon>Chordata</taxon>
        <taxon>Craniata</taxon>
        <taxon>Vertebrata</taxon>
        <taxon>Euteleostomi</taxon>
        <taxon>Mammalia</taxon>
        <taxon>Eutheria</taxon>
        <taxon>Euarchontoglires</taxon>
        <taxon>Glires</taxon>
        <taxon>Rodentia</taxon>
        <taxon>Myomorpha</taxon>
        <taxon>Muroidea</taxon>
        <taxon>Muridae</taxon>
        <taxon>Murinae</taxon>
        <taxon>Mus</taxon>
        <taxon>Mus</taxon>
    </lineage>
</organism>
<evidence type="ECO:0000250" key="1">
    <source>
        <dbReference type="UniProtKB" id="Q9H079"/>
    </source>
</evidence>
<evidence type="ECO:0000255" key="2">
    <source>
        <dbReference type="PROSITE-ProRule" id="PRU00768"/>
    </source>
</evidence>
<name>KTBL1_MOUSE</name>
<keyword id="KW-0963">Cytoplasm</keyword>
<keyword id="KW-0206">Cytoskeleton</keyword>
<keyword id="KW-0539">Nucleus</keyword>
<keyword id="KW-0597">Phosphoprotein</keyword>
<keyword id="KW-1185">Reference proteome</keyword>
<accession>Q9CWJ3</accession>
<accession>Q3U7P7</accession>
<accession>Q8C7R6</accession>
<reference key="1">
    <citation type="journal article" date="2005" name="Science">
        <title>The transcriptional landscape of the mammalian genome.</title>
        <authorList>
            <person name="Carninci P."/>
            <person name="Kasukawa T."/>
            <person name="Katayama S."/>
            <person name="Gough J."/>
            <person name="Frith M.C."/>
            <person name="Maeda N."/>
            <person name="Oyama R."/>
            <person name="Ravasi T."/>
            <person name="Lenhard B."/>
            <person name="Wells C."/>
            <person name="Kodzius R."/>
            <person name="Shimokawa K."/>
            <person name="Bajic V.B."/>
            <person name="Brenner S.E."/>
            <person name="Batalov S."/>
            <person name="Forrest A.R."/>
            <person name="Zavolan M."/>
            <person name="Davis M.J."/>
            <person name="Wilming L.G."/>
            <person name="Aidinis V."/>
            <person name="Allen J.E."/>
            <person name="Ambesi-Impiombato A."/>
            <person name="Apweiler R."/>
            <person name="Aturaliya R.N."/>
            <person name="Bailey T.L."/>
            <person name="Bansal M."/>
            <person name="Baxter L."/>
            <person name="Beisel K.W."/>
            <person name="Bersano T."/>
            <person name="Bono H."/>
            <person name="Chalk A.M."/>
            <person name="Chiu K.P."/>
            <person name="Choudhary V."/>
            <person name="Christoffels A."/>
            <person name="Clutterbuck D.R."/>
            <person name="Crowe M.L."/>
            <person name="Dalla E."/>
            <person name="Dalrymple B.P."/>
            <person name="de Bono B."/>
            <person name="Della Gatta G."/>
            <person name="di Bernardo D."/>
            <person name="Down T."/>
            <person name="Engstrom P."/>
            <person name="Fagiolini M."/>
            <person name="Faulkner G."/>
            <person name="Fletcher C.F."/>
            <person name="Fukushima T."/>
            <person name="Furuno M."/>
            <person name="Futaki S."/>
            <person name="Gariboldi M."/>
            <person name="Georgii-Hemming P."/>
            <person name="Gingeras T.R."/>
            <person name="Gojobori T."/>
            <person name="Green R.E."/>
            <person name="Gustincich S."/>
            <person name="Harbers M."/>
            <person name="Hayashi Y."/>
            <person name="Hensch T.K."/>
            <person name="Hirokawa N."/>
            <person name="Hill D."/>
            <person name="Huminiecki L."/>
            <person name="Iacono M."/>
            <person name="Ikeo K."/>
            <person name="Iwama A."/>
            <person name="Ishikawa T."/>
            <person name="Jakt M."/>
            <person name="Kanapin A."/>
            <person name="Katoh M."/>
            <person name="Kawasawa Y."/>
            <person name="Kelso J."/>
            <person name="Kitamura H."/>
            <person name="Kitano H."/>
            <person name="Kollias G."/>
            <person name="Krishnan S.P."/>
            <person name="Kruger A."/>
            <person name="Kummerfeld S.K."/>
            <person name="Kurochkin I.V."/>
            <person name="Lareau L.F."/>
            <person name="Lazarevic D."/>
            <person name="Lipovich L."/>
            <person name="Liu J."/>
            <person name="Liuni S."/>
            <person name="McWilliam S."/>
            <person name="Madan Babu M."/>
            <person name="Madera M."/>
            <person name="Marchionni L."/>
            <person name="Matsuda H."/>
            <person name="Matsuzawa S."/>
            <person name="Miki H."/>
            <person name="Mignone F."/>
            <person name="Miyake S."/>
            <person name="Morris K."/>
            <person name="Mottagui-Tabar S."/>
            <person name="Mulder N."/>
            <person name="Nakano N."/>
            <person name="Nakauchi H."/>
            <person name="Ng P."/>
            <person name="Nilsson R."/>
            <person name="Nishiguchi S."/>
            <person name="Nishikawa S."/>
            <person name="Nori F."/>
            <person name="Ohara O."/>
            <person name="Okazaki Y."/>
            <person name="Orlando V."/>
            <person name="Pang K.C."/>
            <person name="Pavan W.J."/>
            <person name="Pavesi G."/>
            <person name="Pesole G."/>
            <person name="Petrovsky N."/>
            <person name="Piazza S."/>
            <person name="Reed J."/>
            <person name="Reid J.F."/>
            <person name="Ring B.Z."/>
            <person name="Ringwald M."/>
            <person name="Rost B."/>
            <person name="Ruan Y."/>
            <person name="Salzberg S.L."/>
            <person name="Sandelin A."/>
            <person name="Schneider C."/>
            <person name="Schoenbach C."/>
            <person name="Sekiguchi K."/>
            <person name="Semple C.A."/>
            <person name="Seno S."/>
            <person name="Sessa L."/>
            <person name="Sheng Y."/>
            <person name="Shibata Y."/>
            <person name="Shimada H."/>
            <person name="Shimada K."/>
            <person name="Silva D."/>
            <person name="Sinclair B."/>
            <person name="Sperling S."/>
            <person name="Stupka E."/>
            <person name="Sugiura K."/>
            <person name="Sultana R."/>
            <person name="Takenaka Y."/>
            <person name="Taki K."/>
            <person name="Tammoja K."/>
            <person name="Tan S.L."/>
            <person name="Tang S."/>
            <person name="Taylor M.S."/>
            <person name="Tegner J."/>
            <person name="Teichmann S.A."/>
            <person name="Ueda H.R."/>
            <person name="van Nimwegen E."/>
            <person name="Verardo R."/>
            <person name="Wei C.L."/>
            <person name="Yagi K."/>
            <person name="Yamanishi H."/>
            <person name="Zabarovsky E."/>
            <person name="Zhu S."/>
            <person name="Zimmer A."/>
            <person name="Hide W."/>
            <person name="Bult C."/>
            <person name="Grimmond S.M."/>
            <person name="Teasdale R.D."/>
            <person name="Liu E.T."/>
            <person name="Brusic V."/>
            <person name="Quackenbush J."/>
            <person name="Wahlestedt C."/>
            <person name="Mattick J.S."/>
            <person name="Hume D.A."/>
            <person name="Kai C."/>
            <person name="Sasaki D."/>
            <person name="Tomaru Y."/>
            <person name="Fukuda S."/>
            <person name="Kanamori-Katayama M."/>
            <person name="Suzuki M."/>
            <person name="Aoki J."/>
            <person name="Arakawa T."/>
            <person name="Iida J."/>
            <person name="Imamura K."/>
            <person name="Itoh M."/>
            <person name="Kato T."/>
            <person name="Kawaji H."/>
            <person name="Kawagashira N."/>
            <person name="Kawashima T."/>
            <person name="Kojima M."/>
            <person name="Kondo S."/>
            <person name="Konno H."/>
            <person name="Nakano K."/>
            <person name="Ninomiya N."/>
            <person name="Nishio T."/>
            <person name="Okada M."/>
            <person name="Plessy C."/>
            <person name="Shibata K."/>
            <person name="Shiraki T."/>
            <person name="Suzuki S."/>
            <person name="Tagami M."/>
            <person name="Waki K."/>
            <person name="Watahiki A."/>
            <person name="Okamura-Oho Y."/>
            <person name="Suzuki H."/>
            <person name="Kawai J."/>
            <person name="Hayashizaki Y."/>
        </authorList>
    </citation>
    <scope>NUCLEOTIDE SEQUENCE [LARGE SCALE MRNA]</scope>
    <source>
        <strain>C57BL/6J</strain>
        <tissue>Bone marrow</tissue>
        <tissue>Embryonic stem cell</tissue>
        <tissue>Liver</tissue>
        <tissue>Vagina</tissue>
    </source>
</reference>
<reference key="2">
    <citation type="journal article" date="2004" name="Genome Res.">
        <title>The status, quality, and expansion of the NIH full-length cDNA project: the Mammalian Gene Collection (MGC).</title>
        <authorList>
            <consortium name="The MGC Project Team"/>
        </authorList>
    </citation>
    <scope>NUCLEOTIDE SEQUENCE [LARGE SCALE MRNA]</scope>
    <source>
        <strain>FVB/N</strain>
        <tissue>Mammary tumor</tissue>
    </source>
</reference>
<gene>
    <name type="primary">Katnbl1</name>
</gene>
<sequence length="299" mass="34035">MAFDTHHVKKRNFSNSIDLPRKRISNFTSKNMKEVKRSPKQLAAYISRTVAQAVKSPEKLRKVLYHRKLVRRSFPNPCYKTKQSPKSGGCDMANKENELACAGHLPENLRHDSRTFVINTSDSGSSQTESPSSKYSGFFSEVSQDHETMAQVLFSRNLRLNVALTFWRKRSISELVAYLVRIEDLGVVVDCLPVLTNSLQEEKQYISLGCCVDLLPLVKSLLQSRFEEYVIVGLNWLQAVIKRWWSELSSTSEIISDGNIKILKQQLSGLWEQESHLTLVPGYTGNIAKDVDAYLLQLH</sequence>
<dbReference type="EMBL" id="AK010654">
    <property type="protein sequence ID" value="BAB27094.1"/>
    <property type="molecule type" value="mRNA"/>
</dbReference>
<dbReference type="EMBL" id="AK036861">
    <property type="protein sequence ID" value="BAC29607.1"/>
    <property type="molecule type" value="mRNA"/>
</dbReference>
<dbReference type="EMBL" id="AK151464">
    <property type="protein sequence ID" value="BAE30422.1"/>
    <property type="molecule type" value="mRNA"/>
</dbReference>
<dbReference type="EMBL" id="AK152570">
    <property type="protein sequence ID" value="BAE31322.1"/>
    <property type="molecule type" value="mRNA"/>
</dbReference>
<dbReference type="EMBL" id="AK168639">
    <property type="protein sequence ID" value="BAE40498.1"/>
    <property type="molecule type" value="mRNA"/>
</dbReference>
<dbReference type="EMBL" id="BC003216">
    <property type="protein sequence ID" value="AAH03216.1"/>
    <property type="molecule type" value="mRNA"/>
</dbReference>
<dbReference type="EMBL" id="BC080661">
    <property type="protein sequence ID" value="AAH80661.1"/>
    <property type="molecule type" value="mRNA"/>
</dbReference>
<dbReference type="EMBL" id="BC012402">
    <property type="protein sequence ID" value="AAH12402.1"/>
    <property type="molecule type" value="mRNA"/>
</dbReference>
<dbReference type="CCDS" id="CCDS16554.1"/>
<dbReference type="RefSeq" id="NP_077216.1">
    <property type="nucleotide sequence ID" value="NM_024254.3"/>
</dbReference>
<dbReference type="SMR" id="Q9CWJ3"/>
<dbReference type="FunCoup" id="Q9CWJ3">
    <property type="interactions" value="2494"/>
</dbReference>
<dbReference type="IntAct" id="Q9CWJ3">
    <property type="interactions" value="1"/>
</dbReference>
<dbReference type="MINT" id="Q9CWJ3"/>
<dbReference type="STRING" id="10090.ENSMUSP00000028552"/>
<dbReference type="iPTMnet" id="Q9CWJ3"/>
<dbReference type="PhosphoSitePlus" id="Q9CWJ3"/>
<dbReference type="PaxDb" id="10090-ENSMUSP00000028552"/>
<dbReference type="PeptideAtlas" id="Q9CWJ3"/>
<dbReference type="ProteomicsDB" id="263571"/>
<dbReference type="Pumba" id="Q9CWJ3"/>
<dbReference type="Antibodypedia" id="22695">
    <property type="antibodies" value="83 antibodies from 20 providers"/>
</dbReference>
<dbReference type="Ensembl" id="ENSMUST00000028552.4">
    <property type="protein sequence ID" value="ENSMUSP00000028552.4"/>
    <property type="gene ID" value="ENSMUSG00000027132.4"/>
</dbReference>
<dbReference type="GeneID" id="72425"/>
<dbReference type="KEGG" id="mmu:72425"/>
<dbReference type="UCSC" id="uc008lpa.1">
    <property type="organism name" value="mouse"/>
</dbReference>
<dbReference type="AGR" id="MGI:1919675"/>
<dbReference type="CTD" id="79768"/>
<dbReference type="MGI" id="MGI:1919675">
    <property type="gene designation" value="Katnbl1"/>
</dbReference>
<dbReference type="VEuPathDB" id="HostDB:ENSMUSG00000027132"/>
<dbReference type="eggNOG" id="ENOG502QT0F">
    <property type="taxonomic scope" value="Eukaryota"/>
</dbReference>
<dbReference type="GeneTree" id="ENSGT00390000012351"/>
<dbReference type="HOGENOM" id="CLU_079657_0_0_1"/>
<dbReference type="InParanoid" id="Q9CWJ3"/>
<dbReference type="OMA" id="DSCAEDR"/>
<dbReference type="OrthoDB" id="8754475at2759"/>
<dbReference type="PhylomeDB" id="Q9CWJ3"/>
<dbReference type="TreeFam" id="TF332359"/>
<dbReference type="BioGRID-ORCS" id="72425">
    <property type="hits" value="1 hit in 76 CRISPR screens"/>
</dbReference>
<dbReference type="ChiTaRS" id="Katnbl1">
    <property type="organism name" value="mouse"/>
</dbReference>
<dbReference type="PRO" id="PR:Q9CWJ3"/>
<dbReference type="Proteomes" id="UP000000589">
    <property type="component" value="Chromosome 2"/>
</dbReference>
<dbReference type="RNAct" id="Q9CWJ3">
    <property type="molecule type" value="protein"/>
</dbReference>
<dbReference type="Bgee" id="ENSMUSG00000027132">
    <property type="expression patterns" value="Expressed in animal zygote and 234 other cell types or tissues"/>
</dbReference>
<dbReference type="GO" id="GO:0032154">
    <property type="term" value="C:cleavage furrow"/>
    <property type="evidence" value="ECO:0007669"/>
    <property type="project" value="Ensembl"/>
</dbReference>
<dbReference type="GO" id="GO:0005737">
    <property type="term" value="C:cytoplasm"/>
    <property type="evidence" value="ECO:0007669"/>
    <property type="project" value="UniProtKB-KW"/>
</dbReference>
<dbReference type="GO" id="GO:0008352">
    <property type="term" value="C:katanin complex"/>
    <property type="evidence" value="ECO:0007669"/>
    <property type="project" value="Ensembl"/>
</dbReference>
<dbReference type="GO" id="GO:0030496">
    <property type="term" value="C:midbody"/>
    <property type="evidence" value="ECO:0007669"/>
    <property type="project" value="Ensembl"/>
</dbReference>
<dbReference type="GO" id="GO:0097431">
    <property type="term" value="C:mitotic spindle pole"/>
    <property type="evidence" value="ECO:0000250"/>
    <property type="project" value="UniProtKB"/>
</dbReference>
<dbReference type="GO" id="GO:0005730">
    <property type="term" value="C:nucleolus"/>
    <property type="evidence" value="ECO:0007669"/>
    <property type="project" value="Ensembl"/>
</dbReference>
<dbReference type="GO" id="GO:0005654">
    <property type="term" value="C:nucleoplasm"/>
    <property type="evidence" value="ECO:0007669"/>
    <property type="project" value="Ensembl"/>
</dbReference>
<dbReference type="GO" id="GO:0005634">
    <property type="term" value="C:nucleus"/>
    <property type="evidence" value="ECO:0000250"/>
    <property type="project" value="UniProtKB"/>
</dbReference>
<dbReference type="GO" id="GO:0008017">
    <property type="term" value="F:microtubule binding"/>
    <property type="evidence" value="ECO:0007669"/>
    <property type="project" value="InterPro"/>
</dbReference>
<dbReference type="GO" id="GO:0031122">
    <property type="term" value="P:cytoplasmic microtubule organization"/>
    <property type="evidence" value="ECO:0007669"/>
    <property type="project" value="Ensembl"/>
</dbReference>
<dbReference type="GO" id="GO:0051495">
    <property type="term" value="P:positive regulation of cytoskeleton organization"/>
    <property type="evidence" value="ECO:0000250"/>
    <property type="project" value="UniProtKB"/>
</dbReference>
<dbReference type="InterPro" id="IPR028021">
    <property type="entry name" value="Katanin_C-terminal"/>
</dbReference>
<dbReference type="InterPro" id="IPR042404">
    <property type="entry name" value="KATNBL1"/>
</dbReference>
<dbReference type="PANTHER" id="PTHR14682">
    <property type="entry name" value="KATNB1-LIKE PROTEIN 1"/>
    <property type="match status" value="1"/>
</dbReference>
<dbReference type="PANTHER" id="PTHR14682:SF1">
    <property type="entry name" value="KATNB1-LIKE PROTEIN 1"/>
    <property type="match status" value="1"/>
</dbReference>
<dbReference type="Pfam" id="PF13925">
    <property type="entry name" value="Katanin_con80"/>
    <property type="match status" value="1"/>
</dbReference>
<feature type="chain" id="PRO_0000089982" description="KATNB1-like protein 1">
    <location>
        <begin position="1"/>
        <end position="299"/>
    </location>
</feature>
<feature type="short sequence motif" description="Nuclear localization signal" evidence="2">
    <location>
        <begin position="8"/>
        <end position="15"/>
    </location>
</feature>
<feature type="modified residue" description="Phosphoserine" evidence="1">
    <location>
        <position position="56"/>
    </location>
</feature>
<proteinExistence type="evidence at transcript level"/>
<comment type="function">
    <text evidence="1">Regulates microtubule-severing activity of KATNAL1 in a concentration-dependent manner in vitro.</text>
</comment>
<comment type="subunit">
    <text evidence="1">Interacts with KATNA1 and KATNAL1; these interactions are competed by KATNB1 which has a higher affinity for them.</text>
</comment>
<comment type="subcellular location">
    <subcellularLocation>
        <location evidence="1">Nucleus</location>
    </subcellularLocation>
    <subcellularLocation>
        <location evidence="1">Cytoplasm</location>
        <location evidence="1">Cytoskeleton</location>
        <location evidence="1">Spindle pole</location>
    </subcellularLocation>
    <text evidence="1">Localizes to the spindle poles only during mitosis. Sequestered to the nucleus during interphase.</text>
</comment>